<accession>Q8NQU2</accession>
<feature type="signal peptide" evidence="1">
    <location>
        <begin position="1"/>
        <end position="26"/>
    </location>
</feature>
<feature type="chain" id="PRO_0000459381" description="Arginine-binding protein ArgT" evidence="1">
    <location>
        <begin position="27"/>
        <end position="304"/>
    </location>
</feature>
<feature type="lipid moiety-binding region" description="N-palmitoyl cysteine" evidence="1">
    <location>
        <position position="27"/>
    </location>
</feature>
<feature type="lipid moiety-binding region" description="S-diacylglycerol cysteine" evidence="1">
    <location>
        <position position="27"/>
    </location>
</feature>
<protein>
    <recommendedName>
        <fullName evidence="4">Arginine-binding protein ArgT</fullName>
    </recommendedName>
</protein>
<gene>
    <name evidence="3" type="primary">argT</name>
    <name evidence="6" type="ordered locus">Cgl1332</name>
    <name evidence="7" type="ordered locus">cg1504</name>
</gene>
<sequence length="304" mass="32663">MRFPKIPKRAVAATVGIVATSFTLASCVTNEEQGNPDGWEQIVPDPVPEIQAMVPEALAQRGVLTAGANPPFPPFEFKDSDGQIIGVEMDLVRAMAGVMGLEFSPQEQDFSLILPSVQAGTLDIGASGFTDNEERRENFDFIDFLFAGVQWAQATDRETPIDPENACGLTVAVQRTTVAETDDVRPRSAQCEAEGKEPITILSYETADTAATALILGRADALAADSPVSAWAAERSEGRIEVVGDMYLAAPFGFAFPLESDLTPAAAAAFQHLIDTGDYQRIMAQWGIEEGLLDEALINEQPLN</sequence>
<keyword id="KW-0029">Amino-acid transport</keyword>
<keyword id="KW-1003">Cell membrane</keyword>
<keyword id="KW-0449">Lipoprotein</keyword>
<keyword id="KW-0472">Membrane</keyword>
<keyword id="KW-0564">Palmitate</keyword>
<keyword id="KW-1185">Reference proteome</keyword>
<keyword id="KW-0732">Signal</keyword>
<keyword id="KW-0813">Transport</keyword>
<reference key="1">
    <citation type="journal article" date="2003" name="Appl. Microbiol. Biotechnol.">
        <title>The Corynebacterium glutamicum genome: features and impacts on biotechnological processes.</title>
        <authorList>
            <person name="Ikeda M."/>
            <person name="Nakagawa S."/>
        </authorList>
    </citation>
    <scope>NUCLEOTIDE SEQUENCE [LARGE SCALE GENOMIC DNA]</scope>
    <source>
        <strain>ATCC 13032 / DSM 20300 / JCM 1318 / BCRC 11384 / CCUG 27702 / LMG 3730 / NBRC 12168 / NCIMB 10025 / NRRL B-2784 / 534</strain>
    </source>
</reference>
<reference key="2">
    <citation type="journal article" date="2003" name="J. Biotechnol.">
        <title>The complete Corynebacterium glutamicum ATCC 13032 genome sequence and its impact on the production of L-aspartate-derived amino acids and vitamins.</title>
        <authorList>
            <person name="Kalinowski J."/>
            <person name="Bathe B."/>
            <person name="Bartels D."/>
            <person name="Bischoff N."/>
            <person name="Bott M."/>
            <person name="Burkovski A."/>
            <person name="Dusch N."/>
            <person name="Eggeling L."/>
            <person name="Eikmanns B.J."/>
            <person name="Gaigalat L."/>
            <person name="Goesmann A."/>
            <person name="Hartmann M."/>
            <person name="Huthmacher K."/>
            <person name="Kraemer R."/>
            <person name="Linke B."/>
            <person name="McHardy A.C."/>
            <person name="Meyer F."/>
            <person name="Moeckel B."/>
            <person name="Pfefferle W."/>
            <person name="Puehler A."/>
            <person name="Rey D.A."/>
            <person name="Rueckert C."/>
            <person name="Rupp O."/>
            <person name="Sahm H."/>
            <person name="Wendisch V.F."/>
            <person name="Wiegraebe I."/>
            <person name="Tauch A."/>
        </authorList>
    </citation>
    <scope>NUCLEOTIDE SEQUENCE [LARGE SCALE GENOMIC DNA]</scope>
    <source>
        <strain>ATCC 13032 / DSM 20300 / JCM 1318 / BCRC 11384 / CCUG 27702 / LMG 3730 / NBRC 12168 / NCIMB 10025 / NRRL B-2784 / 534</strain>
    </source>
</reference>
<reference key="3">
    <citation type="journal article" date="2023" name="Microb. Cell Fact.">
        <title>Discovery of novel amino acid production traits by evolution of synthetic co-cultures.</title>
        <authorList>
            <person name="Zuchowski R."/>
            <person name="Schito S."/>
            <person name="Neuheuser F."/>
            <person name="Menke P."/>
            <person name="Berger D."/>
            <person name="Hollmann N."/>
            <person name="Gujar S."/>
            <person name="Sundermeyer L."/>
            <person name="Mack C."/>
            <person name="Wirtz A."/>
            <person name="Weiergraeber O.H."/>
            <person name="Polen T."/>
            <person name="Bott M."/>
            <person name="Noack S."/>
            <person name="Baumgart M."/>
        </authorList>
    </citation>
    <scope>FUNCTION IN ARGININE IMPORT</scope>
    <scope>DISRUPTION PHENOTYPE</scope>
    <source>
        <strain>ATCC 13032 / DSM 20300 / JCM 1318 / BCRC 11384 / CCUG 27702 / LMG 3730 / NBRC 12168 / NCIMB 10025 / NRRL B-2784 / 534</strain>
    </source>
</reference>
<name>ARGT_CORGL</name>
<comment type="function">
    <text evidence="2">Part of the ABC transporter complex ArgTUV involved in L-arginine import (PubMed:37061714). May also transport L-citrulline (PubMed:37061714). Binds L-arginine and its molecular precursor L-citrulline, but not L-histidine, L-glutamate, L-glutamine, L-lysine or L-cysteine (PubMed:37061714).</text>
</comment>
<comment type="subunit">
    <text evidence="5">The complex is probably composed of two ATP-binding proteins (ArgV), two transmembrane proteins (ArgU) and a solute-binding protein (ArgT).</text>
</comment>
<comment type="subcellular location">
    <subcellularLocation>
        <location evidence="1">Cell membrane</location>
        <topology evidence="1">Lipid-anchor</topology>
    </subcellularLocation>
</comment>
<comment type="disruption phenotype">
    <text evidence="2">Deletion of argTUV in an L-arginine producer strain results in a faster and 24% higher L-arginine production in comparison to the parental strain.</text>
</comment>
<comment type="similarity">
    <text evidence="4">Belongs to the bacterial solute-binding protein 3 family.</text>
</comment>
<comment type="sequence caution" evidence="4">
    <conflict type="erroneous initiation">
        <sequence resource="EMBL-CDS" id="BAB98725"/>
    </conflict>
    <text>Extended N-terminus.</text>
</comment>
<evidence type="ECO:0000255" key="1">
    <source>
        <dbReference type="PROSITE-ProRule" id="PRU00303"/>
    </source>
</evidence>
<evidence type="ECO:0000269" key="2">
    <source>
    </source>
</evidence>
<evidence type="ECO:0000303" key="3">
    <source>
    </source>
</evidence>
<evidence type="ECO:0000305" key="4"/>
<evidence type="ECO:0000305" key="5">
    <source>
    </source>
</evidence>
<evidence type="ECO:0000312" key="6">
    <source>
        <dbReference type="EMBL" id="BAB98725.1"/>
    </source>
</evidence>
<evidence type="ECO:0000312" key="7">
    <source>
        <dbReference type="EMBL" id="CAF21340.1"/>
    </source>
</evidence>
<dbReference type="EMBL" id="BA000036">
    <property type="protein sequence ID" value="BAB98725.1"/>
    <property type="status" value="ALT_INIT"/>
    <property type="molecule type" value="Genomic_DNA"/>
</dbReference>
<dbReference type="EMBL" id="BX927152">
    <property type="protein sequence ID" value="CAF21340.1"/>
    <property type="molecule type" value="Genomic_DNA"/>
</dbReference>
<dbReference type="RefSeq" id="NP_600552.1">
    <property type="nucleotide sequence ID" value="NC_003450.3"/>
</dbReference>
<dbReference type="SMR" id="Q8NQU2"/>
<dbReference type="STRING" id="196627.cg1504"/>
<dbReference type="KEGG" id="cgb:cg1504"/>
<dbReference type="KEGG" id="cgl:Cgl1332"/>
<dbReference type="PATRIC" id="fig|196627.13.peg.1302"/>
<dbReference type="eggNOG" id="COG0834">
    <property type="taxonomic scope" value="Bacteria"/>
</dbReference>
<dbReference type="HOGENOM" id="CLU_019602_18_1_11"/>
<dbReference type="OrthoDB" id="9762169at2"/>
<dbReference type="BioCyc" id="CORYNE:G18NG-10910-MONOMER"/>
<dbReference type="Proteomes" id="UP000000582">
    <property type="component" value="Chromosome"/>
</dbReference>
<dbReference type="Proteomes" id="UP000001009">
    <property type="component" value="Chromosome"/>
</dbReference>
<dbReference type="GO" id="GO:0005886">
    <property type="term" value="C:plasma membrane"/>
    <property type="evidence" value="ECO:0007669"/>
    <property type="project" value="UniProtKB-SubCell"/>
</dbReference>
<dbReference type="GO" id="GO:0006865">
    <property type="term" value="P:amino acid transport"/>
    <property type="evidence" value="ECO:0007669"/>
    <property type="project" value="UniProtKB-KW"/>
</dbReference>
<dbReference type="CDD" id="cd01004">
    <property type="entry name" value="PBP2_MidA_like"/>
    <property type="match status" value="1"/>
</dbReference>
<dbReference type="Gene3D" id="3.40.190.10">
    <property type="entry name" value="Periplasmic binding protein-like II"/>
    <property type="match status" value="2"/>
</dbReference>
<dbReference type="InterPro" id="IPR001638">
    <property type="entry name" value="Solute-binding_3/MltF_N"/>
</dbReference>
<dbReference type="PANTHER" id="PTHR35936:SF17">
    <property type="entry name" value="ARGININE-BINDING EXTRACELLULAR PROTEIN ARTP"/>
    <property type="match status" value="1"/>
</dbReference>
<dbReference type="PANTHER" id="PTHR35936">
    <property type="entry name" value="MEMBRANE-BOUND LYTIC MUREIN TRANSGLYCOSYLASE F"/>
    <property type="match status" value="1"/>
</dbReference>
<dbReference type="Pfam" id="PF00497">
    <property type="entry name" value="SBP_bac_3"/>
    <property type="match status" value="1"/>
</dbReference>
<dbReference type="SMART" id="SM00062">
    <property type="entry name" value="PBPb"/>
    <property type="match status" value="1"/>
</dbReference>
<dbReference type="SUPFAM" id="SSF53850">
    <property type="entry name" value="Periplasmic binding protein-like II"/>
    <property type="match status" value="1"/>
</dbReference>
<dbReference type="PROSITE" id="PS51257">
    <property type="entry name" value="PROKAR_LIPOPROTEIN"/>
    <property type="match status" value="1"/>
</dbReference>
<organism>
    <name type="scientific">Corynebacterium glutamicum (strain ATCC 13032 / DSM 20300 / JCM 1318 / BCRC 11384 / CCUG 27702 / LMG 3730 / NBRC 12168 / NCIMB 10025 / NRRL B-2784 / 534)</name>
    <dbReference type="NCBI Taxonomy" id="196627"/>
    <lineage>
        <taxon>Bacteria</taxon>
        <taxon>Bacillati</taxon>
        <taxon>Actinomycetota</taxon>
        <taxon>Actinomycetes</taxon>
        <taxon>Mycobacteriales</taxon>
        <taxon>Corynebacteriaceae</taxon>
        <taxon>Corynebacterium</taxon>
    </lineage>
</organism>
<proteinExistence type="evidence at protein level"/>